<geneLocation type="mitochondrion"/>
<sequence length="347" mass="38862">MNPLIFTMIMLTVILGTTIVMMSSHWLMIWMGFEMNMLAVIPLLMKQYNPRSMEAATKYFLTQATASMLLMLAVIINLLYSGQWTFTKLMNPTASIIMTLALGMKMGLAPFHFWVPEVTQGISLSSGLILLTWQKLAPLSVLYVISPAINLDLILLMSMMSIAIGGWGGLNQTQLRKILAYSSIAHMGWMASILVFNPTMTLLNLLLYILMTTTTFMLFMVASATTTLSLSHMWNKMPLITTSTLTIMLSLGGLPPLTGFLPKWMIIQELTKNNNITLATLMAITALLNLFFYMRLTYATSLTMFPTTNNMKMKWQFNNKKQLKCLPVLIILSTITLPLAPAITLLN</sequence>
<dbReference type="EC" id="7.1.1.2" evidence="1"/>
<dbReference type="EMBL" id="AY504523">
    <property type="protein sequence ID" value="AAS91388.1"/>
    <property type="molecule type" value="Genomic_DNA"/>
</dbReference>
<dbReference type="SMR" id="Q330G9"/>
<dbReference type="GO" id="GO:0005743">
    <property type="term" value="C:mitochondrial inner membrane"/>
    <property type="evidence" value="ECO:0000250"/>
    <property type="project" value="UniProtKB"/>
</dbReference>
<dbReference type="GO" id="GO:0008137">
    <property type="term" value="F:NADH dehydrogenase (ubiquinone) activity"/>
    <property type="evidence" value="ECO:0000250"/>
    <property type="project" value="UniProtKB"/>
</dbReference>
<dbReference type="GO" id="GO:0006120">
    <property type="term" value="P:mitochondrial electron transport, NADH to ubiquinone"/>
    <property type="evidence" value="ECO:0000250"/>
    <property type="project" value="UniProtKB"/>
</dbReference>
<dbReference type="GO" id="GO:0032981">
    <property type="term" value="P:mitochondrial respiratory chain complex I assembly"/>
    <property type="evidence" value="ECO:0000250"/>
    <property type="project" value="UniProtKB"/>
</dbReference>
<dbReference type="InterPro" id="IPR050175">
    <property type="entry name" value="Complex_I_Subunit_2"/>
</dbReference>
<dbReference type="InterPro" id="IPR010933">
    <property type="entry name" value="NADH_DH_su2_C"/>
</dbReference>
<dbReference type="InterPro" id="IPR003917">
    <property type="entry name" value="NADH_UbQ_OxRdtase_chain2"/>
</dbReference>
<dbReference type="InterPro" id="IPR001750">
    <property type="entry name" value="ND/Mrp_TM"/>
</dbReference>
<dbReference type="PANTHER" id="PTHR46552">
    <property type="entry name" value="NADH-UBIQUINONE OXIDOREDUCTASE CHAIN 2"/>
    <property type="match status" value="1"/>
</dbReference>
<dbReference type="PANTHER" id="PTHR46552:SF1">
    <property type="entry name" value="NADH-UBIQUINONE OXIDOREDUCTASE CHAIN 2"/>
    <property type="match status" value="1"/>
</dbReference>
<dbReference type="Pfam" id="PF06444">
    <property type="entry name" value="NADH_dehy_S2_C"/>
    <property type="match status" value="1"/>
</dbReference>
<dbReference type="Pfam" id="PF00361">
    <property type="entry name" value="Proton_antipo_M"/>
    <property type="match status" value="1"/>
</dbReference>
<dbReference type="PRINTS" id="PR01436">
    <property type="entry name" value="NADHDHGNASE2"/>
</dbReference>
<proteinExistence type="inferred from homology"/>
<keyword id="KW-0249">Electron transport</keyword>
<keyword id="KW-0472">Membrane</keyword>
<keyword id="KW-0496">Mitochondrion</keyword>
<keyword id="KW-0999">Mitochondrion inner membrane</keyword>
<keyword id="KW-0520">NAD</keyword>
<keyword id="KW-0679">Respiratory chain</keyword>
<keyword id="KW-1278">Translocase</keyword>
<keyword id="KW-0812">Transmembrane</keyword>
<keyword id="KW-1133">Transmembrane helix</keyword>
<keyword id="KW-0813">Transport</keyword>
<keyword id="KW-0830">Ubiquinone</keyword>
<name>NU2M_SACBI</name>
<gene>
    <name evidence="1" type="primary">MT-ND2</name>
    <name type="synonym">MTND2</name>
    <name type="synonym">NADH2</name>
    <name type="synonym">ND2</name>
</gene>
<protein>
    <recommendedName>
        <fullName evidence="1">NADH-ubiquinone oxidoreductase chain 2</fullName>
        <ecNumber evidence="1">7.1.1.2</ecNumber>
    </recommendedName>
    <alternativeName>
        <fullName>NADH dehydrogenase subunit 2</fullName>
    </alternativeName>
</protein>
<accession>Q330G9</accession>
<organism>
    <name type="scientific">Saccopteryx bilineata</name>
    <name type="common">Greater white-lined bat</name>
    <dbReference type="NCBI Taxonomy" id="59482"/>
    <lineage>
        <taxon>Eukaryota</taxon>
        <taxon>Metazoa</taxon>
        <taxon>Chordata</taxon>
        <taxon>Craniata</taxon>
        <taxon>Vertebrata</taxon>
        <taxon>Euteleostomi</taxon>
        <taxon>Mammalia</taxon>
        <taxon>Eutheria</taxon>
        <taxon>Laurasiatheria</taxon>
        <taxon>Chiroptera</taxon>
        <taxon>Yangochiroptera</taxon>
        <taxon>Emballonuridae</taxon>
        <taxon>Emballonurinae</taxon>
        <taxon>Saccopteryx</taxon>
    </lineage>
</organism>
<reference key="1">
    <citation type="submission" date="2003-12" db="EMBL/GenBank/DDBJ databases">
        <title>Bats and birds: flying in the face of mtDNA evolutionary rates.</title>
        <authorList>
            <person name="Worthington Wilmer J.M."/>
            <person name="Schneider C.J."/>
            <person name="Sorenson M.D."/>
        </authorList>
    </citation>
    <scope>NUCLEOTIDE SEQUENCE [GENOMIC DNA]</scope>
    <source>
        <strain>Isolate CR1</strain>
    </source>
</reference>
<comment type="function">
    <text evidence="1">Core subunit of the mitochondrial membrane respiratory chain NADH dehydrogenase (Complex I) which catalyzes electron transfer from NADH through the respiratory chain, using ubiquinone as an electron acceptor. Essential for the catalytic activity and assembly of complex I.</text>
</comment>
<comment type="catalytic activity">
    <reaction evidence="1">
        <text>a ubiquinone + NADH + 5 H(+)(in) = a ubiquinol + NAD(+) + 4 H(+)(out)</text>
        <dbReference type="Rhea" id="RHEA:29091"/>
        <dbReference type="Rhea" id="RHEA-COMP:9565"/>
        <dbReference type="Rhea" id="RHEA-COMP:9566"/>
        <dbReference type="ChEBI" id="CHEBI:15378"/>
        <dbReference type="ChEBI" id="CHEBI:16389"/>
        <dbReference type="ChEBI" id="CHEBI:17976"/>
        <dbReference type="ChEBI" id="CHEBI:57540"/>
        <dbReference type="ChEBI" id="CHEBI:57945"/>
        <dbReference type="EC" id="7.1.1.2"/>
    </reaction>
</comment>
<comment type="subunit">
    <text evidence="1 2">Core subunit of respiratory chain NADH dehydrogenase (Complex I) which is composed of 45 different subunits. Interacts with TMEM242 (By similarity).</text>
</comment>
<comment type="subcellular location">
    <subcellularLocation>
        <location evidence="2">Mitochondrion inner membrane</location>
        <topology evidence="3">Multi-pass membrane protein</topology>
    </subcellularLocation>
</comment>
<comment type="similarity">
    <text evidence="4">Belongs to the complex I subunit 2 family.</text>
</comment>
<feature type="chain" id="PRO_0000256680" description="NADH-ubiquinone oxidoreductase chain 2">
    <location>
        <begin position="1"/>
        <end position="347"/>
    </location>
</feature>
<feature type="transmembrane region" description="Helical" evidence="3">
    <location>
        <begin position="3"/>
        <end position="23"/>
    </location>
</feature>
<feature type="transmembrane region" description="Helical" evidence="3">
    <location>
        <begin position="25"/>
        <end position="45"/>
    </location>
</feature>
<feature type="transmembrane region" description="Helical" evidence="3">
    <location>
        <begin position="59"/>
        <end position="79"/>
    </location>
</feature>
<feature type="transmembrane region" description="Helical" evidence="3">
    <location>
        <begin position="96"/>
        <end position="116"/>
    </location>
</feature>
<feature type="transmembrane region" description="Helical" evidence="3">
    <location>
        <begin position="122"/>
        <end position="144"/>
    </location>
</feature>
<feature type="transmembrane region" description="Helical" evidence="3">
    <location>
        <begin position="149"/>
        <end position="171"/>
    </location>
</feature>
<feature type="transmembrane region" description="Helical" evidence="3">
    <location>
        <begin position="178"/>
        <end position="198"/>
    </location>
</feature>
<feature type="transmembrane region" description="Helical" evidence="3">
    <location>
        <begin position="202"/>
        <end position="222"/>
    </location>
</feature>
<feature type="transmembrane region" description="Helical" evidence="3">
    <location>
        <begin position="247"/>
        <end position="267"/>
    </location>
</feature>
<feature type="transmembrane region" description="Helical" evidence="3">
    <location>
        <begin position="276"/>
        <end position="296"/>
    </location>
</feature>
<feature type="transmembrane region" description="Helical" evidence="3">
    <location>
        <begin position="326"/>
        <end position="346"/>
    </location>
</feature>
<evidence type="ECO:0000250" key="1">
    <source>
        <dbReference type="UniProtKB" id="P03891"/>
    </source>
</evidence>
<evidence type="ECO:0000250" key="2">
    <source>
        <dbReference type="UniProtKB" id="P03892"/>
    </source>
</evidence>
<evidence type="ECO:0000255" key="3"/>
<evidence type="ECO:0000305" key="4"/>